<name>AROC_CALS4</name>
<comment type="function">
    <text evidence="1">Catalyzes the anti-1,4-elimination of the C-3 phosphate and the C-6 proR hydrogen from 5-enolpyruvylshikimate-3-phosphate (EPSP) to yield chorismate, which is the branch point compound that serves as the starting substrate for the three terminal pathways of aromatic amino acid biosynthesis. This reaction introduces a second double bond into the aromatic ring system.</text>
</comment>
<comment type="catalytic activity">
    <reaction evidence="1">
        <text>5-O-(1-carboxyvinyl)-3-phosphoshikimate = chorismate + phosphate</text>
        <dbReference type="Rhea" id="RHEA:21020"/>
        <dbReference type="ChEBI" id="CHEBI:29748"/>
        <dbReference type="ChEBI" id="CHEBI:43474"/>
        <dbReference type="ChEBI" id="CHEBI:57701"/>
        <dbReference type="EC" id="4.2.3.5"/>
    </reaction>
</comment>
<comment type="cofactor">
    <cofactor evidence="1">
        <name>FMNH2</name>
        <dbReference type="ChEBI" id="CHEBI:57618"/>
    </cofactor>
    <text evidence="1">Reduced FMN (FMNH(2)).</text>
</comment>
<comment type="pathway">
    <text evidence="1">Metabolic intermediate biosynthesis; chorismate biosynthesis; chorismate from D-erythrose 4-phosphate and phosphoenolpyruvate: step 7/7.</text>
</comment>
<comment type="subunit">
    <text evidence="1">Homotetramer.</text>
</comment>
<comment type="similarity">
    <text evidence="1">Belongs to the chorismate synthase family.</text>
</comment>
<gene>
    <name evidence="1" type="primary">aroC</name>
    <name type="ordered locus">TTE1711</name>
</gene>
<protein>
    <recommendedName>
        <fullName evidence="1">Chorismate synthase</fullName>
        <shortName evidence="1">CS</shortName>
        <ecNumber evidence="1">4.2.3.5</ecNumber>
    </recommendedName>
    <alternativeName>
        <fullName evidence="1">5-enolpyruvylshikimate-3-phosphate phospholyase</fullName>
    </alternativeName>
</protein>
<accession>Q8R9A6</accession>
<dbReference type="EC" id="4.2.3.5" evidence="1"/>
<dbReference type="EMBL" id="AE008691">
    <property type="protein sequence ID" value="AAM24911.1"/>
    <property type="molecule type" value="Genomic_DNA"/>
</dbReference>
<dbReference type="RefSeq" id="WP_011025915.1">
    <property type="nucleotide sequence ID" value="NZ_JANUCV010000001.1"/>
</dbReference>
<dbReference type="SMR" id="Q8R9A6"/>
<dbReference type="STRING" id="273068.TTE1711"/>
<dbReference type="KEGG" id="tte:TTE1711"/>
<dbReference type="eggNOG" id="COG0082">
    <property type="taxonomic scope" value="Bacteria"/>
</dbReference>
<dbReference type="HOGENOM" id="CLU_034547_2_0_9"/>
<dbReference type="OrthoDB" id="9771806at2"/>
<dbReference type="UniPathway" id="UPA00053">
    <property type="reaction ID" value="UER00090"/>
</dbReference>
<dbReference type="Proteomes" id="UP000000555">
    <property type="component" value="Chromosome"/>
</dbReference>
<dbReference type="GO" id="GO:0005829">
    <property type="term" value="C:cytosol"/>
    <property type="evidence" value="ECO:0007669"/>
    <property type="project" value="TreeGrafter"/>
</dbReference>
<dbReference type="GO" id="GO:0004107">
    <property type="term" value="F:chorismate synthase activity"/>
    <property type="evidence" value="ECO:0007669"/>
    <property type="project" value="UniProtKB-UniRule"/>
</dbReference>
<dbReference type="GO" id="GO:0010181">
    <property type="term" value="F:FMN binding"/>
    <property type="evidence" value="ECO:0007669"/>
    <property type="project" value="TreeGrafter"/>
</dbReference>
<dbReference type="GO" id="GO:0008652">
    <property type="term" value="P:amino acid biosynthetic process"/>
    <property type="evidence" value="ECO:0007669"/>
    <property type="project" value="UniProtKB-KW"/>
</dbReference>
<dbReference type="GO" id="GO:0009073">
    <property type="term" value="P:aromatic amino acid family biosynthetic process"/>
    <property type="evidence" value="ECO:0007669"/>
    <property type="project" value="UniProtKB-KW"/>
</dbReference>
<dbReference type="GO" id="GO:0009423">
    <property type="term" value="P:chorismate biosynthetic process"/>
    <property type="evidence" value="ECO:0007669"/>
    <property type="project" value="UniProtKB-UniRule"/>
</dbReference>
<dbReference type="CDD" id="cd07304">
    <property type="entry name" value="Chorismate_synthase"/>
    <property type="match status" value="1"/>
</dbReference>
<dbReference type="Gene3D" id="3.60.150.10">
    <property type="entry name" value="Chorismate synthase AroC"/>
    <property type="match status" value="2"/>
</dbReference>
<dbReference type="HAMAP" id="MF_00300">
    <property type="entry name" value="Chorismate_synth"/>
    <property type="match status" value="1"/>
</dbReference>
<dbReference type="InterPro" id="IPR000453">
    <property type="entry name" value="Chorismate_synth"/>
</dbReference>
<dbReference type="InterPro" id="IPR035904">
    <property type="entry name" value="Chorismate_synth_AroC_sf"/>
</dbReference>
<dbReference type="InterPro" id="IPR020541">
    <property type="entry name" value="Chorismate_synthase_CS"/>
</dbReference>
<dbReference type="PANTHER" id="PTHR21085">
    <property type="entry name" value="CHORISMATE SYNTHASE"/>
    <property type="match status" value="1"/>
</dbReference>
<dbReference type="PANTHER" id="PTHR21085:SF0">
    <property type="entry name" value="CHORISMATE SYNTHASE"/>
    <property type="match status" value="1"/>
</dbReference>
<dbReference type="Pfam" id="PF01264">
    <property type="entry name" value="Chorismate_synt"/>
    <property type="match status" value="1"/>
</dbReference>
<dbReference type="PIRSF" id="PIRSF001456">
    <property type="entry name" value="Chorismate_synth"/>
    <property type="match status" value="1"/>
</dbReference>
<dbReference type="SUPFAM" id="SSF103263">
    <property type="entry name" value="Chorismate synthase, AroC"/>
    <property type="match status" value="1"/>
</dbReference>
<dbReference type="PROSITE" id="PS00787">
    <property type="entry name" value="CHORISMATE_SYNTHASE_1"/>
    <property type="match status" value="1"/>
</dbReference>
<dbReference type="PROSITE" id="PS00788">
    <property type="entry name" value="CHORISMATE_SYNTHASE_2"/>
    <property type="match status" value="1"/>
</dbReference>
<evidence type="ECO:0000255" key="1">
    <source>
        <dbReference type="HAMAP-Rule" id="MF_00300"/>
    </source>
</evidence>
<evidence type="ECO:0000256" key="2">
    <source>
        <dbReference type="SAM" id="MobiDB-lite"/>
    </source>
</evidence>
<sequence>MRYLTAGESHGEALIAIIEGLPSNLFIDAEFINKELERRQKGYGRGGRMAIEKDEIHIISGVRDGKTTGAPLAMEIKNRDYKNWKDKKVPPVTRPRPGHADLPGSIKYNQRDIRNILERASARETAARVAVGSVAKLLLKELNISLKSRVLEIGGAKREEKWKRLIEKAKKEGDTLGGIIEIVIEGVPVGLGSHAQWDRKLDALLAYHVMSVQGIKGVEFGLGFEAARLPGSLVHDDIYYKENEGFYRKTNNAGGIEGGMSNGNPIVIRAAMKPIPTLLRPLDSVDIATKEETKAIYERSDVTAVEAAACVLEAVCAWVIADECLKKFGGDSVEELKRNYDTYLAYVRSF</sequence>
<keyword id="KW-0028">Amino-acid biosynthesis</keyword>
<keyword id="KW-0057">Aromatic amino acid biosynthesis</keyword>
<keyword id="KW-0274">FAD</keyword>
<keyword id="KW-0285">Flavoprotein</keyword>
<keyword id="KW-0288">FMN</keyword>
<keyword id="KW-0456">Lyase</keyword>
<keyword id="KW-0521">NADP</keyword>
<keyword id="KW-1185">Reference proteome</keyword>
<organism>
    <name type="scientific">Caldanaerobacter subterraneus subsp. tengcongensis (strain DSM 15242 / JCM 11007 / NBRC 100824 / MB4)</name>
    <name type="common">Thermoanaerobacter tengcongensis</name>
    <dbReference type="NCBI Taxonomy" id="273068"/>
    <lineage>
        <taxon>Bacteria</taxon>
        <taxon>Bacillati</taxon>
        <taxon>Bacillota</taxon>
        <taxon>Clostridia</taxon>
        <taxon>Thermoanaerobacterales</taxon>
        <taxon>Thermoanaerobacteraceae</taxon>
        <taxon>Caldanaerobacter</taxon>
    </lineage>
</organism>
<reference key="1">
    <citation type="journal article" date="2002" name="Genome Res.">
        <title>A complete sequence of the T. tengcongensis genome.</title>
        <authorList>
            <person name="Bao Q."/>
            <person name="Tian Y."/>
            <person name="Li W."/>
            <person name="Xu Z."/>
            <person name="Xuan Z."/>
            <person name="Hu S."/>
            <person name="Dong W."/>
            <person name="Yang J."/>
            <person name="Chen Y."/>
            <person name="Xue Y."/>
            <person name="Xu Y."/>
            <person name="Lai X."/>
            <person name="Huang L."/>
            <person name="Dong X."/>
            <person name="Ma Y."/>
            <person name="Ling L."/>
            <person name="Tan H."/>
            <person name="Chen R."/>
            <person name="Wang J."/>
            <person name="Yu J."/>
            <person name="Yang H."/>
        </authorList>
    </citation>
    <scope>NUCLEOTIDE SEQUENCE [LARGE SCALE GENOMIC DNA]</scope>
    <source>
        <strain>DSM 15242 / JCM 11007 / NBRC 100824 / MB4</strain>
    </source>
</reference>
<proteinExistence type="inferred from homology"/>
<feature type="chain" id="PRO_0000322427" description="Chorismate synthase">
    <location>
        <begin position="1"/>
        <end position="350"/>
    </location>
</feature>
<feature type="region of interest" description="Disordered" evidence="2">
    <location>
        <begin position="85"/>
        <end position="104"/>
    </location>
</feature>
<feature type="binding site" evidence="1">
    <location>
        <position position="39"/>
    </location>
    <ligand>
        <name>NADP(+)</name>
        <dbReference type="ChEBI" id="CHEBI:58349"/>
    </ligand>
</feature>
<feature type="binding site" evidence="1">
    <location>
        <position position="45"/>
    </location>
    <ligand>
        <name>NADP(+)</name>
        <dbReference type="ChEBI" id="CHEBI:58349"/>
    </ligand>
</feature>
<feature type="binding site" evidence="1">
    <location>
        <begin position="119"/>
        <end position="121"/>
    </location>
    <ligand>
        <name>FMN</name>
        <dbReference type="ChEBI" id="CHEBI:58210"/>
    </ligand>
</feature>
<feature type="binding site" evidence="1">
    <location>
        <begin position="213"/>
        <end position="214"/>
    </location>
    <ligand>
        <name>FMN</name>
        <dbReference type="ChEBI" id="CHEBI:58210"/>
    </ligand>
</feature>
<feature type="binding site" evidence="1">
    <location>
        <position position="258"/>
    </location>
    <ligand>
        <name>FMN</name>
        <dbReference type="ChEBI" id="CHEBI:58210"/>
    </ligand>
</feature>
<feature type="binding site" evidence="1">
    <location>
        <begin position="273"/>
        <end position="277"/>
    </location>
    <ligand>
        <name>FMN</name>
        <dbReference type="ChEBI" id="CHEBI:58210"/>
    </ligand>
</feature>
<feature type="binding site" evidence="1">
    <location>
        <position position="299"/>
    </location>
    <ligand>
        <name>FMN</name>
        <dbReference type="ChEBI" id="CHEBI:58210"/>
    </ligand>
</feature>